<protein>
    <recommendedName>
        <fullName evidence="1">NH(3)-dependent NAD(+) synthetase</fullName>
        <ecNumber evidence="1">6.3.1.5</ecNumber>
    </recommendedName>
</protein>
<organism>
    <name type="scientific">Helicobacter pylori (strain J99 / ATCC 700824)</name>
    <name type="common">Campylobacter pylori J99</name>
    <dbReference type="NCBI Taxonomy" id="85963"/>
    <lineage>
        <taxon>Bacteria</taxon>
        <taxon>Pseudomonadati</taxon>
        <taxon>Campylobacterota</taxon>
        <taxon>Epsilonproteobacteria</taxon>
        <taxon>Campylobacterales</taxon>
        <taxon>Helicobacteraceae</taxon>
        <taxon>Helicobacter</taxon>
    </lineage>
</organism>
<evidence type="ECO:0000255" key="1">
    <source>
        <dbReference type="HAMAP-Rule" id="MF_00193"/>
    </source>
</evidence>
<evidence type="ECO:0000305" key="2"/>
<proteinExistence type="inferred from homology"/>
<feature type="chain" id="PRO_0000152174" description="NH(3)-dependent NAD(+) synthetase">
    <location>
        <begin position="1"/>
        <end position="260"/>
    </location>
</feature>
<feature type="binding site" evidence="1">
    <location>
        <begin position="31"/>
        <end position="38"/>
    </location>
    <ligand>
        <name>ATP</name>
        <dbReference type="ChEBI" id="CHEBI:30616"/>
    </ligand>
</feature>
<feature type="binding site" evidence="1">
    <location>
        <position position="37"/>
    </location>
    <ligand>
        <name>Mg(2+)</name>
        <dbReference type="ChEBI" id="CHEBI:18420"/>
    </ligand>
</feature>
<feature type="binding site" evidence="1">
    <location>
        <position position="112"/>
    </location>
    <ligand>
        <name>deamido-NAD(+)</name>
        <dbReference type="ChEBI" id="CHEBI:58437"/>
    </ligand>
</feature>
<feature type="binding site" evidence="1">
    <location>
        <position position="132"/>
    </location>
    <ligand>
        <name>ATP</name>
        <dbReference type="ChEBI" id="CHEBI:30616"/>
    </ligand>
</feature>
<feature type="binding site" evidence="1">
    <location>
        <position position="137"/>
    </location>
    <ligand>
        <name>Mg(2+)</name>
        <dbReference type="ChEBI" id="CHEBI:18420"/>
    </ligand>
</feature>
<feature type="binding site" evidence="1">
    <location>
        <position position="161"/>
    </location>
    <ligand>
        <name>ATP</name>
        <dbReference type="ChEBI" id="CHEBI:30616"/>
    </ligand>
</feature>
<feature type="binding site" evidence="1">
    <location>
        <position position="183"/>
    </location>
    <ligand>
        <name>ATP</name>
        <dbReference type="ChEBI" id="CHEBI:30616"/>
    </ligand>
</feature>
<accession>Q9ZMB0</accession>
<comment type="function">
    <text evidence="1">Catalyzes the ATP-dependent amidation of deamido-NAD to form NAD. Uses ammonia as a nitrogen source.</text>
</comment>
<comment type="catalytic activity">
    <reaction evidence="1">
        <text>deamido-NAD(+) + NH4(+) + ATP = AMP + diphosphate + NAD(+) + H(+)</text>
        <dbReference type="Rhea" id="RHEA:21188"/>
        <dbReference type="ChEBI" id="CHEBI:15378"/>
        <dbReference type="ChEBI" id="CHEBI:28938"/>
        <dbReference type="ChEBI" id="CHEBI:30616"/>
        <dbReference type="ChEBI" id="CHEBI:33019"/>
        <dbReference type="ChEBI" id="CHEBI:57540"/>
        <dbReference type="ChEBI" id="CHEBI:58437"/>
        <dbReference type="ChEBI" id="CHEBI:456215"/>
        <dbReference type="EC" id="6.3.1.5"/>
    </reaction>
</comment>
<comment type="pathway">
    <text evidence="1">Cofactor biosynthesis; NAD(+) biosynthesis; NAD(+) from deamido-NAD(+) (ammonia route): step 1/1.</text>
</comment>
<comment type="subunit">
    <text evidence="1">Homodimer.</text>
</comment>
<comment type="similarity">
    <text evidence="1 2">Belongs to the NAD synthetase family.</text>
</comment>
<name>NADE_HELPJ</name>
<dbReference type="EC" id="6.3.1.5" evidence="1"/>
<dbReference type="EMBL" id="AE001439">
    <property type="protein sequence ID" value="AAD05885.1"/>
    <property type="molecule type" value="Genomic_DNA"/>
</dbReference>
<dbReference type="PIR" id="A71949">
    <property type="entry name" value="A71949"/>
</dbReference>
<dbReference type="RefSeq" id="WP_001168315.1">
    <property type="nucleotide sequence ID" value="NC_000921.1"/>
</dbReference>
<dbReference type="SMR" id="Q9ZMB0"/>
<dbReference type="KEGG" id="hpj:jhp_0312"/>
<dbReference type="PATRIC" id="fig|85963.30.peg.701"/>
<dbReference type="eggNOG" id="COG0171">
    <property type="taxonomic scope" value="Bacteria"/>
</dbReference>
<dbReference type="UniPathway" id="UPA00253">
    <property type="reaction ID" value="UER00333"/>
</dbReference>
<dbReference type="Proteomes" id="UP000000804">
    <property type="component" value="Chromosome"/>
</dbReference>
<dbReference type="GO" id="GO:0005737">
    <property type="term" value="C:cytoplasm"/>
    <property type="evidence" value="ECO:0007669"/>
    <property type="project" value="InterPro"/>
</dbReference>
<dbReference type="GO" id="GO:0005524">
    <property type="term" value="F:ATP binding"/>
    <property type="evidence" value="ECO:0007669"/>
    <property type="project" value="UniProtKB-UniRule"/>
</dbReference>
<dbReference type="GO" id="GO:0004359">
    <property type="term" value="F:glutaminase activity"/>
    <property type="evidence" value="ECO:0007669"/>
    <property type="project" value="InterPro"/>
</dbReference>
<dbReference type="GO" id="GO:0046872">
    <property type="term" value="F:metal ion binding"/>
    <property type="evidence" value="ECO:0007669"/>
    <property type="project" value="UniProtKB-KW"/>
</dbReference>
<dbReference type="GO" id="GO:0003952">
    <property type="term" value="F:NAD+ synthase (glutamine-hydrolyzing) activity"/>
    <property type="evidence" value="ECO:0007669"/>
    <property type="project" value="InterPro"/>
</dbReference>
<dbReference type="GO" id="GO:0008795">
    <property type="term" value="F:NAD+ synthase activity"/>
    <property type="evidence" value="ECO:0007669"/>
    <property type="project" value="UniProtKB-UniRule"/>
</dbReference>
<dbReference type="GO" id="GO:0009435">
    <property type="term" value="P:NAD biosynthetic process"/>
    <property type="evidence" value="ECO:0007669"/>
    <property type="project" value="UniProtKB-UniRule"/>
</dbReference>
<dbReference type="CDD" id="cd00553">
    <property type="entry name" value="NAD_synthase"/>
    <property type="match status" value="1"/>
</dbReference>
<dbReference type="FunFam" id="3.40.50.620:FF:000106">
    <property type="entry name" value="Glutamine-dependent NAD(+) synthetase"/>
    <property type="match status" value="1"/>
</dbReference>
<dbReference type="Gene3D" id="3.40.50.620">
    <property type="entry name" value="HUPs"/>
    <property type="match status" value="1"/>
</dbReference>
<dbReference type="HAMAP" id="MF_00193">
    <property type="entry name" value="NadE_ammonia_dep"/>
    <property type="match status" value="1"/>
</dbReference>
<dbReference type="InterPro" id="IPR022310">
    <property type="entry name" value="NAD/GMP_synthase"/>
</dbReference>
<dbReference type="InterPro" id="IPR003694">
    <property type="entry name" value="NAD_synthase"/>
</dbReference>
<dbReference type="InterPro" id="IPR022926">
    <property type="entry name" value="NH(3)-dep_NAD(+)_synth"/>
</dbReference>
<dbReference type="InterPro" id="IPR014729">
    <property type="entry name" value="Rossmann-like_a/b/a_fold"/>
</dbReference>
<dbReference type="NCBIfam" id="TIGR00552">
    <property type="entry name" value="nadE"/>
    <property type="match status" value="1"/>
</dbReference>
<dbReference type="NCBIfam" id="NF010587">
    <property type="entry name" value="PRK13980.1"/>
    <property type="match status" value="1"/>
</dbReference>
<dbReference type="PANTHER" id="PTHR23090:SF9">
    <property type="entry name" value="GLUTAMINE-DEPENDENT NAD(+) SYNTHETASE"/>
    <property type="match status" value="1"/>
</dbReference>
<dbReference type="PANTHER" id="PTHR23090">
    <property type="entry name" value="NH 3 /GLUTAMINE-DEPENDENT NAD + SYNTHETASE"/>
    <property type="match status" value="1"/>
</dbReference>
<dbReference type="Pfam" id="PF02540">
    <property type="entry name" value="NAD_synthase"/>
    <property type="match status" value="1"/>
</dbReference>
<dbReference type="SUPFAM" id="SSF52402">
    <property type="entry name" value="Adenine nucleotide alpha hydrolases-like"/>
    <property type="match status" value="1"/>
</dbReference>
<keyword id="KW-0067">ATP-binding</keyword>
<keyword id="KW-0436">Ligase</keyword>
<keyword id="KW-0460">Magnesium</keyword>
<keyword id="KW-0479">Metal-binding</keyword>
<keyword id="KW-0520">NAD</keyword>
<keyword id="KW-0547">Nucleotide-binding</keyword>
<gene>
    <name evidence="1" type="primary">nadE</name>
    <name type="ordered locus">jhp_0312</name>
</gene>
<reference key="1">
    <citation type="journal article" date="1999" name="Nature">
        <title>Genomic sequence comparison of two unrelated isolates of the human gastric pathogen Helicobacter pylori.</title>
        <authorList>
            <person name="Alm R.A."/>
            <person name="Ling L.-S.L."/>
            <person name="Moir D.T."/>
            <person name="King B.L."/>
            <person name="Brown E.D."/>
            <person name="Doig P.C."/>
            <person name="Smith D.R."/>
            <person name="Noonan B."/>
            <person name="Guild B.C."/>
            <person name="deJonge B.L."/>
            <person name="Carmel G."/>
            <person name="Tummino P.J."/>
            <person name="Caruso A."/>
            <person name="Uria-Nickelsen M."/>
            <person name="Mills D.M."/>
            <person name="Ives C."/>
            <person name="Gibson R."/>
            <person name="Merberg D."/>
            <person name="Mills S.D."/>
            <person name="Jiang Q."/>
            <person name="Taylor D.E."/>
            <person name="Vovis G.F."/>
            <person name="Trust T.J."/>
        </authorList>
    </citation>
    <scope>NUCLEOTIDE SEQUENCE [LARGE SCALE GENOMIC DNA]</scope>
    <source>
        <strain>J99 / ATCC 700824</strain>
    </source>
</reference>
<sequence>MQKDYQKLIVYLCDFLEKEVQKKGFKKVVYGLSGGLDSAVVGVLCQKVFKENAHALLMPSSVSMPESRTDALNLCEKFSIPYTEYSIAPYDKIFGSHFKDASLTRKGNFCARLRMAFLYDYSLKSDSLVIGTSNKSERMLGYGTLFGDLACAINPIGELFKTEVYELAYYLNIPKKILNKPPSADLFVGQSDEKDLGYPYSVIDPLLKDIEALFQTKPIHLETLIQLGYAEILVKNIISRIQKNAFKLELPTIAKRFNPE</sequence>